<reference key="1">
    <citation type="journal article" date="2001" name="DNA Res.">
        <title>Complete genome sequence of an aerobic thermoacidophilic Crenarchaeon, Sulfolobus tokodaii strain7.</title>
        <authorList>
            <person name="Kawarabayasi Y."/>
            <person name="Hino Y."/>
            <person name="Horikawa H."/>
            <person name="Jin-no K."/>
            <person name="Takahashi M."/>
            <person name="Sekine M."/>
            <person name="Baba S."/>
            <person name="Ankai A."/>
            <person name="Kosugi H."/>
            <person name="Hosoyama A."/>
            <person name="Fukui S."/>
            <person name="Nagai Y."/>
            <person name="Nishijima K."/>
            <person name="Otsuka R."/>
            <person name="Nakazawa H."/>
            <person name="Takamiya M."/>
            <person name="Kato Y."/>
            <person name="Yoshizawa T."/>
            <person name="Tanaka T."/>
            <person name="Kudoh Y."/>
            <person name="Yamazaki J."/>
            <person name="Kushida N."/>
            <person name="Oguchi A."/>
            <person name="Aoki K."/>
            <person name="Masuda S."/>
            <person name="Yanagii M."/>
            <person name="Nishimura M."/>
            <person name="Yamagishi A."/>
            <person name="Oshima T."/>
            <person name="Kikuchi H."/>
        </authorList>
    </citation>
    <scope>NUCLEOTIDE SEQUENCE [LARGE SCALE GENOMIC DNA]</scope>
    <source>
        <strain>DSM 16993 / JCM 10545 / NBRC 100140 / 7</strain>
    </source>
</reference>
<evidence type="ECO:0000255" key="1">
    <source>
        <dbReference type="HAMAP-Rule" id="MF_01337"/>
    </source>
</evidence>
<evidence type="ECO:0000305" key="2"/>
<accession>Q975J9</accession>
<proteinExistence type="inferred from homology"/>
<organism>
    <name type="scientific">Sulfurisphaera tokodaii (strain DSM 16993 / JCM 10545 / NBRC 100140 / 7)</name>
    <name type="common">Sulfolobus tokodaii</name>
    <dbReference type="NCBI Taxonomy" id="273063"/>
    <lineage>
        <taxon>Archaea</taxon>
        <taxon>Thermoproteota</taxon>
        <taxon>Thermoprotei</taxon>
        <taxon>Sulfolobales</taxon>
        <taxon>Sulfolobaceae</taxon>
        <taxon>Sulfurisphaera</taxon>
    </lineage>
</organism>
<name>RL18_SULTO</name>
<protein>
    <recommendedName>
        <fullName evidence="1">Large ribosomal subunit protein uL18</fullName>
    </recommendedName>
    <alternativeName>
        <fullName evidence="2">50S ribosomal protein L18</fullName>
    </alternativeName>
</protein>
<keyword id="KW-1185">Reference proteome</keyword>
<keyword id="KW-0687">Ribonucleoprotein</keyword>
<keyword id="KW-0689">Ribosomal protein</keyword>
<keyword id="KW-0694">RNA-binding</keyword>
<keyword id="KW-0699">rRNA-binding</keyword>
<dbReference type="EMBL" id="BA000023">
    <property type="protein sequence ID" value="BAB65401.1"/>
    <property type="molecule type" value="Genomic_DNA"/>
</dbReference>
<dbReference type="RefSeq" id="WP_010978384.1">
    <property type="nucleotide sequence ID" value="NC_003106.2"/>
</dbReference>
<dbReference type="SMR" id="Q975J9"/>
<dbReference type="STRING" id="273063.STK_04150"/>
<dbReference type="GeneID" id="1458348"/>
<dbReference type="KEGG" id="sto:STK_04150"/>
<dbReference type="PATRIC" id="fig|273063.9.peg.481"/>
<dbReference type="eggNOG" id="arCOG04088">
    <property type="taxonomic scope" value="Archaea"/>
</dbReference>
<dbReference type="OrthoDB" id="8644at2157"/>
<dbReference type="Proteomes" id="UP000001015">
    <property type="component" value="Chromosome"/>
</dbReference>
<dbReference type="GO" id="GO:0022625">
    <property type="term" value="C:cytosolic large ribosomal subunit"/>
    <property type="evidence" value="ECO:0007669"/>
    <property type="project" value="TreeGrafter"/>
</dbReference>
<dbReference type="GO" id="GO:0008097">
    <property type="term" value="F:5S rRNA binding"/>
    <property type="evidence" value="ECO:0007669"/>
    <property type="project" value="InterPro"/>
</dbReference>
<dbReference type="GO" id="GO:0003735">
    <property type="term" value="F:structural constituent of ribosome"/>
    <property type="evidence" value="ECO:0007669"/>
    <property type="project" value="InterPro"/>
</dbReference>
<dbReference type="GO" id="GO:0000027">
    <property type="term" value="P:ribosomal large subunit assembly"/>
    <property type="evidence" value="ECO:0007669"/>
    <property type="project" value="TreeGrafter"/>
</dbReference>
<dbReference type="GO" id="GO:0006412">
    <property type="term" value="P:translation"/>
    <property type="evidence" value="ECO:0007669"/>
    <property type="project" value="UniProtKB-UniRule"/>
</dbReference>
<dbReference type="CDD" id="cd00432">
    <property type="entry name" value="Ribosomal_L18_L5e"/>
    <property type="match status" value="1"/>
</dbReference>
<dbReference type="Gene3D" id="3.30.420.100">
    <property type="match status" value="1"/>
</dbReference>
<dbReference type="HAMAP" id="MF_01337_A">
    <property type="entry name" value="Ribosomal_uL18_A"/>
    <property type="match status" value="1"/>
</dbReference>
<dbReference type="InterPro" id="IPR005485">
    <property type="entry name" value="Rbsml_uL18_euk"/>
</dbReference>
<dbReference type="NCBIfam" id="NF006342">
    <property type="entry name" value="PRK08569.1"/>
    <property type="match status" value="1"/>
</dbReference>
<dbReference type="PANTHER" id="PTHR23410:SF12">
    <property type="entry name" value="LARGE RIBOSOMAL SUBUNIT PROTEIN UL18"/>
    <property type="match status" value="1"/>
</dbReference>
<dbReference type="PANTHER" id="PTHR23410">
    <property type="entry name" value="RIBOSOMAL PROTEIN L5-RELATED"/>
    <property type="match status" value="1"/>
</dbReference>
<dbReference type="Pfam" id="PF17144">
    <property type="entry name" value="Ribosomal_L5e"/>
    <property type="match status" value="1"/>
</dbReference>
<dbReference type="SUPFAM" id="SSF53137">
    <property type="entry name" value="Translational machinery components"/>
    <property type="match status" value="1"/>
</dbReference>
<comment type="function">
    <text evidence="1">This is one of the proteins that bind and probably mediate the attachment of the 5S RNA into the large ribosomal subunit, where it forms part of the central protuberance.</text>
</comment>
<comment type="subunit">
    <text evidence="1">Part of the 50S ribosomal subunit. Contacts the 5S and 23S rRNAs.</text>
</comment>
<comment type="similarity">
    <text evidence="1">Belongs to the universal ribosomal protein uL18 family.</text>
</comment>
<feature type="chain" id="PRO_0000131419" description="Large ribosomal subunit protein uL18">
    <location>
        <begin position="1"/>
        <end position="196"/>
    </location>
</feature>
<gene>
    <name evidence="1" type="primary">rpl18</name>
    <name type="ordered locus">STK_04150</name>
</gene>
<sequence length="196" mass="21903">MAHGPNYRVKYRRRREGKTNYYKRYTYVINNTTRLVVRLTNKYIIAQIAKFNPKGDVIVVAAHSMELAKKFGWKGDLNNTPAAYLTGYLLGVRALKAGIKEAVADIGLFVPVKGSRIFTAIKGAIDAGLSIPVGDLGIKEDRIKGVHIASYAQKLEAENPELFKRLFSKYLERGLHPKDLPSHFEEILNKIKSGGA</sequence>